<sequence>MTDSFPFSVQESVPLSRFSTFRIGGPARYFKELTSLSEALTVFSYLHTHPLPYIIIGKGSNCLFDDQGFDGLVLYNNIQGQEFLSDTQIKVLSGSSFALLGKRLSSQGFSGLEFAVGIPGTVGGAVFMNAGTTLANTASSLINVEIIDHSGILLSIPREKLLFSYRTSPFQKKPAFIASATFQLTKDPQAAKRAKALIEERILKQPYEYPSAGCIFRNPEGLSAGALIDRAGLKGLKIGGGQISEKHGNFIINTGNACTADILELIEIIQKTLKKQGISLHKEVRIIPFRL</sequence>
<proteinExistence type="inferred from homology"/>
<accession>B0B960</accession>
<accession>O84838</accession>
<accession>Q9KH24</accession>
<dbReference type="EC" id="1.3.1.98" evidence="1"/>
<dbReference type="EMBL" id="AF273612">
    <property type="protein sequence ID" value="AAF86273.1"/>
    <property type="molecule type" value="Genomic_DNA"/>
</dbReference>
<dbReference type="EMBL" id="AM884176">
    <property type="protein sequence ID" value="CAP03647.1"/>
    <property type="molecule type" value="Genomic_DNA"/>
</dbReference>
<dbReference type="RefSeq" id="WP_009873442.1">
    <property type="nucleotide sequence ID" value="NC_010287.1"/>
</dbReference>
<dbReference type="RefSeq" id="YP_001654293.1">
    <property type="nucleotide sequence ID" value="NC_010287.1"/>
</dbReference>
<dbReference type="SMR" id="B0B960"/>
<dbReference type="KEGG" id="ctb:CTL0203"/>
<dbReference type="PATRIC" id="fig|471472.4.peg.219"/>
<dbReference type="HOGENOM" id="CLU_035304_1_1_0"/>
<dbReference type="UniPathway" id="UPA00219"/>
<dbReference type="Proteomes" id="UP001154402">
    <property type="component" value="Chromosome"/>
</dbReference>
<dbReference type="GO" id="GO:0005829">
    <property type="term" value="C:cytosol"/>
    <property type="evidence" value="ECO:0007669"/>
    <property type="project" value="TreeGrafter"/>
</dbReference>
<dbReference type="GO" id="GO:0071949">
    <property type="term" value="F:FAD binding"/>
    <property type="evidence" value="ECO:0007669"/>
    <property type="project" value="InterPro"/>
</dbReference>
<dbReference type="GO" id="GO:0008762">
    <property type="term" value="F:UDP-N-acetylmuramate dehydrogenase activity"/>
    <property type="evidence" value="ECO:0007669"/>
    <property type="project" value="UniProtKB-UniRule"/>
</dbReference>
<dbReference type="GO" id="GO:0051301">
    <property type="term" value="P:cell division"/>
    <property type="evidence" value="ECO:0007669"/>
    <property type="project" value="UniProtKB-KW"/>
</dbReference>
<dbReference type="GO" id="GO:0071555">
    <property type="term" value="P:cell wall organization"/>
    <property type="evidence" value="ECO:0007669"/>
    <property type="project" value="UniProtKB-KW"/>
</dbReference>
<dbReference type="GO" id="GO:0009252">
    <property type="term" value="P:peptidoglycan biosynthetic process"/>
    <property type="evidence" value="ECO:0007669"/>
    <property type="project" value="UniProtKB-UniRule"/>
</dbReference>
<dbReference type="GO" id="GO:0008360">
    <property type="term" value="P:regulation of cell shape"/>
    <property type="evidence" value="ECO:0007669"/>
    <property type="project" value="UniProtKB-KW"/>
</dbReference>
<dbReference type="Gene3D" id="3.30.465.10">
    <property type="match status" value="1"/>
</dbReference>
<dbReference type="Gene3D" id="3.90.78.10">
    <property type="entry name" value="UDP-N-acetylenolpyruvoylglucosamine reductase, C-terminal domain"/>
    <property type="match status" value="1"/>
</dbReference>
<dbReference type="Gene3D" id="3.30.43.10">
    <property type="entry name" value="Uridine Diphospho-n-acetylenolpyruvylglucosamine Reductase, domain 2"/>
    <property type="match status" value="1"/>
</dbReference>
<dbReference type="HAMAP" id="MF_00037">
    <property type="entry name" value="MurB"/>
    <property type="match status" value="1"/>
</dbReference>
<dbReference type="InterPro" id="IPR016166">
    <property type="entry name" value="FAD-bd_PCMH"/>
</dbReference>
<dbReference type="InterPro" id="IPR036318">
    <property type="entry name" value="FAD-bd_PCMH-like_sf"/>
</dbReference>
<dbReference type="InterPro" id="IPR016167">
    <property type="entry name" value="FAD-bd_PCMH_sub1"/>
</dbReference>
<dbReference type="InterPro" id="IPR016169">
    <property type="entry name" value="FAD-bd_PCMH_sub2"/>
</dbReference>
<dbReference type="InterPro" id="IPR003170">
    <property type="entry name" value="MurB"/>
</dbReference>
<dbReference type="InterPro" id="IPR011601">
    <property type="entry name" value="MurB_C"/>
</dbReference>
<dbReference type="InterPro" id="IPR036635">
    <property type="entry name" value="MurB_C_sf"/>
</dbReference>
<dbReference type="InterPro" id="IPR006094">
    <property type="entry name" value="Oxid_FAD_bind_N"/>
</dbReference>
<dbReference type="NCBIfam" id="TIGR00179">
    <property type="entry name" value="murB"/>
    <property type="match status" value="1"/>
</dbReference>
<dbReference type="NCBIfam" id="NF010480">
    <property type="entry name" value="PRK13905.1"/>
    <property type="match status" value="1"/>
</dbReference>
<dbReference type="PANTHER" id="PTHR21071">
    <property type="entry name" value="UDP-N-ACETYLENOLPYRUVOYLGLUCOSAMINE REDUCTASE"/>
    <property type="match status" value="1"/>
</dbReference>
<dbReference type="PANTHER" id="PTHR21071:SF4">
    <property type="entry name" value="UDP-N-ACETYLENOLPYRUVOYLGLUCOSAMINE REDUCTASE"/>
    <property type="match status" value="1"/>
</dbReference>
<dbReference type="Pfam" id="PF01565">
    <property type="entry name" value="FAD_binding_4"/>
    <property type="match status" value="1"/>
</dbReference>
<dbReference type="Pfam" id="PF02873">
    <property type="entry name" value="MurB_C"/>
    <property type="match status" value="1"/>
</dbReference>
<dbReference type="SUPFAM" id="SSF56176">
    <property type="entry name" value="FAD-binding/transporter-associated domain-like"/>
    <property type="match status" value="1"/>
</dbReference>
<dbReference type="SUPFAM" id="SSF56194">
    <property type="entry name" value="Uridine diphospho-N-Acetylenolpyruvylglucosamine reductase, MurB, C-terminal domain"/>
    <property type="match status" value="1"/>
</dbReference>
<dbReference type="PROSITE" id="PS51387">
    <property type="entry name" value="FAD_PCMH"/>
    <property type="match status" value="1"/>
</dbReference>
<comment type="function">
    <text evidence="1">Cell wall formation.</text>
</comment>
<comment type="catalytic activity">
    <reaction evidence="1">
        <text>UDP-N-acetyl-alpha-D-muramate + NADP(+) = UDP-N-acetyl-3-O-(1-carboxyvinyl)-alpha-D-glucosamine + NADPH + H(+)</text>
        <dbReference type="Rhea" id="RHEA:12248"/>
        <dbReference type="ChEBI" id="CHEBI:15378"/>
        <dbReference type="ChEBI" id="CHEBI:57783"/>
        <dbReference type="ChEBI" id="CHEBI:58349"/>
        <dbReference type="ChEBI" id="CHEBI:68483"/>
        <dbReference type="ChEBI" id="CHEBI:70757"/>
        <dbReference type="EC" id="1.3.1.98"/>
    </reaction>
</comment>
<comment type="cofactor">
    <cofactor evidence="1">
        <name>FAD</name>
        <dbReference type="ChEBI" id="CHEBI:57692"/>
    </cofactor>
</comment>
<comment type="pathway">
    <text evidence="1">Cell wall biogenesis; peptidoglycan biosynthesis.</text>
</comment>
<comment type="subcellular location">
    <subcellularLocation>
        <location evidence="1">Cytoplasm</location>
    </subcellularLocation>
</comment>
<comment type="similarity">
    <text evidence="1">Belongs to the MurB family.</text>
</comment>
<protein>
    <recommendedName>
        <fullName evidence="1">UDP-N-acetylenolpyruvoylglucosamine reductase</fullName>
        <ecNumber evidence="1">1.3.1.98</ecNumber>
    </recommendedName>
    <alternativeName>
        <fullName evidence="1">UDP-N-acetylmuramate dehydrogenase</fullName>
    </alternativeName>
</protein>
<name>MURB_CHLT2</name>
<reference key="1">
    <citation type="submission" date="2000-05" db="EMBL/GenBank/DDBJ databases">
        <title>Chlamydial murB gene expression.</title>
        <authorList>
            <person name="Yang L."/>
            <person name="Larsen S.H."/>
        </authorList>
    </citation>
    <scope>NUCLEOTIDE SEQUENCE [GENOMIC DNA]</scope>
</reference>
<reference key="2">
    <citation type="journal article" date="2008" name="Genome Res.">
        <title>Chlamydia trachomatis: genome sequence analysis of lymphogranuloma venereum isolates.</title>
        <authorList>
            <person name="Thomson N.R."/>
            <person name="Holden M.T.G."/>
            <person name="Carder C."/>
            <person name="Lennard N."/>
            <person name="Lockey S.J."/>
            <person name="Marsh P."/>
            <person name="Skipp P."/>
            <person name="O'Connor C.D."/>
            <person name="Goodhead I."/>
            <person name="Norbertzcak H."/>
            <person name="Harris B."/>
            <person name="Ormond D."/>
            <person name="Rance R."/>
            <person name="Quail M.A."/>
            <person name="Parkhill J."/>
            <person name="Stephens R.S."/>
            <person name="Clarke I.N."/>
        </authorList>
    </citation>
    <scope>NUCLEOTIDE SEQUENCE [LARGE SCALE GENOMIC DNA]</scope>
    <source>
        <strain>ATCC VR-902B / DSM 19102 / 434/Bu</strain>
    </source>
</reference>
<keyword id="KW-0131">Cell cycle</keyword>
<keyword id="KW-0132">Cell division</keyword>
<keyword id="KW-0133">Cell shape</keyword>
<keyword id="KW-0961">Cell wall biogenesis/degradation</keyword>
<keyword id="KW-0963">Cytoplasm</keyword>
<keyword id="KW-0274">FAD</keyword>
<keyword id="KW-0285">Flavoprotein</keyword>
<keyword id="KW-0521">NADP</keyword>
<keyword id="KW-0560">Oxidoreductase</keyword>
<keyword id="KW-0573">Peptidoglycan synthesis</keyword>
<gene>
    <name evidence="1" type="primary">murB</name>
    <name type="ordered locus">CTL0203</name>
</gene>
<feature type="chain" id="PRO_1000191408" description="UDP-N-acetylenolpyruvoylglucosamine reductase">
    <location>
        <begin position="1"/>
        <end position="291"/>
    </location>
</feature>
<feature type="domain" description="FAD-binding PCMH-type" evidence="1">
    <location>
        <begin position="22"/>
        <end position="187"/>
    </location>
</feature>
<feature type="active site" evidence="1">
    <location>
        <position position="166"/>
    </location>
</feature>
<feature type="active site" description="Proton donor" evidence="1">
    <location>
        <position position="214"/>
    </location>
</feature>
<feature type="active site" evidence="1">
    <location>
        <position position="283"/>
    </location>
</feature>
<organism>
    <name type="scientific">Chlamydia trachomatis serovar L2 (strain ATCC VR-902B / DSM 19102 / 434/Bu)</name>
    <dbReference type="NCBI Taxonomy" id="471472"/>
    <lineage>
        <taxon>Bacteria</taxon>
        <taxon>Pseudomonadati</taxon>
        <taxon>Chlamydiota</taxon>
        <taxon>Chlamydiia</taxon>
        <taxon>Chlamydiales</taxon>
        <taxon>Chlamydiaceae</taxon>
        <taxon>Chlamydia/Chlamydophila group</taxon>
        <taxon>Chlamydia</taxon>
    </lineage>
</organism>
<evidence type="ECO:0000255" key="1">
    <source>
        <dbReference type="HAMAP-Rule" id="MF_00037"/>
    </source>
</evidence>